<gene>
    <name type="primary">vanB</name>
</gene>
<comment type="cofactor">
    <cofactor evidence="1">
        <name>FMN</name>
        <dbReference type="ChEBI" id="CHEBI:58210"/>
    </cofactor>
</comment>
<comment type="pathway">
    <text>Xenobiotic degradation; vanillyl-alcohol degradation.</text>
</comment>
<comment type="subunit">
    <text>This demethylase system consists of two proteins: an oxygenase and an oxygenase reductase.</text>
</comment>
<comment type="similarity">
    <text evidence="4">Belongs to the PDR/VanB family.</text>
</comment>
<accession>O05617</accession>
<dbReference type="EC" id="1.14.13.-"/>
<dbReference type="EMBL" id="Y11521">
    <property type="protein sequence ID" value="CAA72288.1"/>
    <property type="molecule type" value="Genomic_DNA"/>
</dbReference>
<dbReference type="SMR" id="O05617"/>
<dbReference type="KEGG" id="ag:CAA72288"/>
<dbReference type="BioCyc" id="MetaCyc:MONOMER-14063"/>
<dbReference type="UniPathway" id="UPA00217"/>
<dbReference type="GO" id="GO:0051537">
    <property type="term" value="F:2 iron, 2 sulfur cluster binding"/>
    <property type="evidence" value="ECO:0007669"/>
    <property type="project" value="UniProtKB-KW"/>
</dbReference>
<dbReference type="GO" id="GO:0046872">
    <property type="term" value="F:metal ion binding"/>
    <property type="evidence" value="ECO:0007669"/>
    <property type="project" value="UniProtKB-KW"/>
</dbReference>
<dbReference type="GO" id="GO:0016491">
    <property type="term" value="F:oxidoreductase activity"/>
    <property type="evidence" value="ECO:0007669"/>
    <property type="project" value="UniProtKB-KW"/>
</dbReference>
<dbReference type="GO" id="GO:0046274">
    <property type="term" value="P:lignin catabolic process"/>
    <property type="evidence" value="ECO:0007669"/>
    <property type="project" value="UniProtKB-KW"/>
</dbReference>
<dbReference type="CDD" id="cd00207">
    <property type="entry name" value="fer2"/>
    <property type="match status" value="1"/>
</dbReference>
<dbReference type="CDD" id="cd06185">
    <property type="entry name" value="PDR_like"/>
    <property type="match status" value="1"/>
</dbReference>
<dbReference type="Gene3D" id="3.10.20.30">
    <property type="match status" value="1"/>
</dbReference>
<dbReference type="Gene3D" id="3.40.50.80">
    <property type="entry name" value="Nucleotide-binding domain of ferredoxin-NADP reductase (FNR) module"/>
    <property type="match status" value="1"/>
</dbReference>
<dbReference type="Gene3D" id="2.40.30.10">
    <property type="entry name" value="Translation factors"/>
    <property type="match status" value="1"/>
</dbReference>
<dbReference type="InterPro" id="IPR036010">
    <property type="entry name" value="2Fe-2S_ferredoxin-like_sf"/>
</dbReference>
<dbReference type="InterPro" id="IPR001041">
    <property type="entry name" value="2Fe-2S_ferredoxin-type"/>
</dbReference>
<dbReference type="InterPro" id="IPR006058">
    <property type="entry name" value="2Fe2S_fd_BS"/>
</dbReference>
<dbReference type="InterPro" id="IPR012675">
    <property type="entry name" value="Beta-grasp_dom_sf"/>
</dbReference>
<dbReference type="InterPro" id="IPR054582">
    <property type="entry name" value="DmmA-like_N"/>
</dbReference>
<dbReference type="InterPro" id="IPR017927">
    <property type="entry name" value="FAD-bd_FR_type"/>
</dbReference>
<dbReference type="InterPro" id="IPR039261">
    <property type="entry name" value="FNR_nucleotide-bd"/>
</dbReference>
<dbReference type="InterPro" id="IPR050415">
    <property type="entry name" value="MRET"/>
</dbReference>
<dbReference type="InterPro" id="IPR017938">
    <property type="entry name" value="Riboflavin_synthase-like_b-brl"/>
</dbReference>
<dbReference type="PANTHER" id="PTHR47354:SF1">
    <property type="entry name" value="CARNITINE MONOOXYGENASE REDUCTASE SUBUNIT"/>
    <property type="match status" value="1"/>
</dbReference>
<dbReference type="PANTHER" id="PTHR47354">
    <property type="entry name" value="NADH OXIDOREDUCTASE HCR"/>
    <property type="match status" value="1"/>
</dbReference>
<dbReference type="Pfam" id="PF22290">
    <property type="entry name" value="DmmA-like_N"/>
    <property type="match status" value="1"/>
</dbReference>
<dbReference type="Pfam" id="PF00111">
    <property type="entry name" value="Fer2"/>
    <property type="match status" value="1"/>
</dbReference>
<dbReference type="PRINTS" id="PR00409">
    <property type="entry name" value="PHDIOXRDTASE"/>
</dbReference>
<dbReference type="SUPFAM" id="SSF54292">
    <property type="entry name" value="2Fe-2S ferredoxin-like"/>
    <property type="match status" value="1"/>
</dbReference>
<dbReference type="SUPFAM" id="SSF52343">
    <property type="entry name" value="Ferredoxin reductase-like, C-terminal NADP-linked domain"/>
    <property type="match status" value="1"/>
</dbReference>
<dbReference type="SUPFAM" id="SSF63380">
    <property type="entry name" value="Riboflavin synthase domain-like"/>
    <property type="match status" value="1"/>
</dbReference>
<dbReference type="PROSITE" id="PS00197">
    <property type="entry name" value="2FE2S_FER_1"/>
    <property type="match status" value="1"/>
</dbReference>
<dbReference type="PROSITE" id="PS51085">
    <property type="entry name" value="2FE2S_FER_2"/>
    <property type="match status" value="1"/>
</dbReference>
<dbReference type="PROSITE" id="PS51384">
    <property type="entry name" value="FAD_FR"/>
    <property type="match status" value="1"/>
</dbReference>
<organism>
    <name type="scientific">Pseudomonas sp. (strain HR199 / DSM 7063)</name>
    <dbReference type="NCBI Taxonomy" id="86003"/>
    <lineage>
        <taxon>Bacteria</taxon>
        <taxon>Pseudomonadati</taxon>
        <taxon>Pseudomonadota</taxon>
        <taxon>Gammaproteobacteria</taxon>
        <taxon>Pseudomonadales</taxon>
        <taxon>Pseudomonadaceae</taxon>
        <taxon>Pseudomonas</taxon>
    </lineage>
</organism>
<sequence>MIEVIISAMRLVAQDIISLEFVRADGGLLPPVEAGAHVDVHLPGGLIRQYSLWNQPGAQSHYCIGVLKDPASRGGSKAVHENLRVGMRVQISEPRNLFPLEEGVERSLLFAGGIGITPILCMAQELAAREQDFELHYCARSTDRAAFVEWLKVCDFADHVRFHFDNGPDQQKLNAAALLAAEAEGTHLYVCGPGGFMGHVLDTAKEQGWADNRLHREYFAAAPNVSADDGSFEVRIHSTGQVLQVPADQTVSQVLDAAGIIVPVSCEQGICGTCITRVVDGEPDHRDFFLTDAEKAKNDQFTPCCSRAKSACLVLDL</sequence>
<name>VANB_PSEUH</name>
<proteinExistence type="inferred from homology"/>
<feature type="chain" id="PRO_0000189403" description="Vanillate O-demethylase oxidoreductase">
    <location>
        <begin position="1"/>
        <end position="317"/>
    </location>
</feature>
<feature type="domain" description="FAD-binding FR-type" evidence="3">
    <location>
        <begin position="1"/>
        <end position="101"/>
    </location>
</feature>
<feature type="domain" description="2Fe-2S ferredoxin-type" evidence="2">
    <location>
        <begin position="232"/>
        <end position="317"/>
    </location>
</feature>
<feature type="binding site">
    <location>
        <begin position="105"/>
        <end position="220"/>
    </location>
    <ligand>
        <name>NAD(+)</name>
        <dbReference type="ChEBI" id="CHEBI:57540"/>
    </ligand>
</feature>
<feature type="binding site" evidence="2">
    <location>
        <position position="266"/>
    </location>
    <ligand>
        <name>[2Fe-2S] cluster</name>
        <dbReference type="ChEBI" id="CHEBI:190135"/>
    </ligand>
</feature>
<feature type="binding site" evidence="2">
    <location>
        <position position="271"/>
    </location>
    <ligand>
        <name>[2Fe-2S] cluster</name>
        <dbReference type="ChEBI" id="CHEBI:190135"/>
    </ligand>
</feature>
<feature type="binding site" evidence="2">
    <location>
        <position position="274"/>
    </location>
    <ligand>
        <name>[2Fe-2S] cluster</name>
        <dbReference type="ChEBI" id="CHEBI:190135"/>
    </ligand>
</feature>
<feature type="binding site" evidence="2">
    <location>
        <position position="304"/>
    </location>
    <ligand>
        <name>[2Fe-2S] cluster</name>
        <dbReference type="ChEBI" id="CHEBI:190135"/>
    </ligand>
</feature>
<evidence type="ECO:0000250" key="1"/>
<evidence type="ECO:0000255" key="2">
    <source>
        <dbReference type="PROSITE-ProRule" id="PRU00465"/>
    </source>
</evidence>
<evidence type="ECO:0000255" key="3">
    <source>
        <dbReference type="PROSITE-ProRule" id="PRU00716"/>
    </source>
</evidence>
<evidence type="ECO:0000305" key="4"/>
<reference key="1">
    <citation type="journal article" date="1997" name="J. Bacteriol.">
        <title>Molecular characterization of genes of Pseudomonas sp. strain HR199 involved in bioconversion of vanillin to protocatechuate.</title>
        <authorList>
            <person name="Priefert H."/>
            <person name="Rabenhorst J."/>
            <person name="Steinbuechel A."/>
        </authorList>
    </citation>
    <scope>NUCLEOTIDE SEQUENCE [GENOMIC DNA]</scope>
</reference>
<protein>
    <recommendedName>
        <fullName>Vanillate O-demethylase oxidoreductase</fullName>
        <ecNumber>1.14.13.-</ecNumber>
    </recommendedName>
    <alternativeName>
        <fullName>Vanillate degradation ferredoxin-like protein</fullName>
    </alternativeName>
</protein>
<keyword id="KW-0001">2Fe-2S</keyword>
<keyword id="KW-0058">Aromatic hydrocarbons catabolism</keyword>
<keyword id="KW-0249">Electron transport</keyword>
<keyword id="KW-0285">Flavoprotein</keyword>
<keyword id="KW-0288">FMN</keyword>
<keyword id="KW-0408">Iron</keyword>
<keyword id="KW-0411">Iron-sulfur</keyword>
<keyword id="KW-0439">Lignin degradation</keyword>
<keyword id="KW-0479">Metal-binding</keyword>
<keyword id="KW-0520">NAD</keyword>
<keyword id="KW-0560">Oxidoreductase</keyword>
<keyword id="KW-0813">Transport</keyword>